<protein>
    <recommendedName>
        <fullName evidence="1">Large ribosomal subunit protein uL30</fullName>
    </recommendedName>
    <alternativeName>
        <fullName evidence="2">50S ribosomal protein L30</fullName>
    </alternativeName>
</protein>
<feature type="chain" id="PRO_1000215050" description="Large ribosomal subunit protein uL30">
    <location>
        <begin position="1"/>
        <end position="58"/>
    </location>
</feature>
<organism>
    <name type="scientific">Azotobacter vinelandii (strain DJ / ATCC BAA-1303)</name>
    <dbReference type="NCBI Taxonomy" id="322710"/>
    <lineage>
        <taxon>Bacteria</taxon>
        <taxon>Pseudomonadati</taxon>
        <taxon>Pseudomonadota</taxon>
        <taxon>Gammaproteobacteria</taxon>
        <taxon>Pseudomonadales</taxon>
        <taxon>Pseudomonadaceae</taxon>
        <taxon>Azotobacter</taxon>
    </lineage>
</organism>
<keyword id="KW-0687">Ribonucleoprotein</keyword>
<keyword id="KW-0689">Ribosomal protein</keyword>
<dbReference type="EMBL" id="CP001157">
    <property type="protein sequence ID" value="ACO76894.1"/>
    <property type="molecule type" value="Genomic_DNA"/>
</dbReference>
<dbReference type="RefSeq" id="WP_012699320.1">
    <property type="nucleotide sequence ID" value="NC_012560.1"/>
</dbReference>
<dbReference type="SMR" id="C1DKN1"/>
<dbReference type="STRING" id="322710.Avin_06430"/>
<dbReference type="EnsemblBacteria" id="ACO76894">
    <property type="protein sequence ID" value="ACO76894"/>
    <property type="gene ID" value="Avin_06430"/>
</dbReference>
<dbReference type="GeneID" id="88184054"/>
<dbReference type="KEGG" id="avn:Avin_06430"/>
<dbReference type="eggNOG" id="COG1841">
    <property type="taxonomic scope" value="Bacteria"/>
</dbReference>
<dbReference type="HOGENOM" id="CLU_131047_1_4_6"/>
<dbReference type="OrthoDB" id="9812790at2"/>
<dbReference type="Proteomes" id="UP000002424">
    <property type="component" value="Chromosome"/>
</dbReference>
<dbReference type="GO" id="GO:0022625">
    <property type="term" value="C:cytosolic large ribosomal subunit"/>
    <property type="evidence" value="ECO:0007669"/>
    <property type="project" value="TreeGrafter"/>
</dbReference>
<dbReference type="GO" id="GO:0003735">
    <property type="term" value="F:structural constituent of ribosome"/>
    <property type="evidence" value="ECO:0007669"/>
    <property type="project" value="InterPro"/>
</dbReference>
<dbReference type="GO" id="GO:0006412">
    <property type="term" value="P:translation"/>
    <property type="evidence" value="ECO:0007669"/>
    <property type="project" value="UniProtKB-UniRule"/>
</dbReference>
<dbReference type="CDD" id="cd01658">
    <property type="entry name" value="Ribosomal_L30"/>
    <property type="match status" value="1"/>
</dbReference>
<dbReference type="FunFam" id="3.30.1390.20:FF:000001">
    <property type="entry name" value="50S ribosomal protein L30"/>
    <property type="match status" value="1"/>
</dbReference>
<dbReference type="Gene3D" id="3.30.1390.20">
    <property type="entry name" value="Ribosomal protein L30, ferredoxin-like fold domain"/>
    <property type="match status" value="1"/>
</dbReference>
<dbReference type="HAMAP" id="MF_01371_B">
    <property type="entry name" value="Ribosomal_uL30_B"/>
    <property type="match status" value="1"/>
</dbReference>
<dbReference type="InterPro" id="IPR036919">
    <property type="entry name" value="Ribo_uL30_ferredoxin-like_sf"/>
</dbReference>
<dbReference type="InterPro" id="IPR005996">
    <property type="entry name" value="Ribosomal_uL30_bac-type"/>
</dbReference>
<dbReference type="InterPro" id="IPR016082">
    <property type="entry name" value="Ribosomal_uL30_ferredoxin-like"/>
</dbReference>
<dbReference type="NCBIfam" id="TIGR01308">
    <property type="entry name" value="rpmD_bact"/>
    <property type="match status" value="1"/>
</dbReference>
<dbReference type="PANTHER" id="PTHR15892:SF2">
    <property type="entry name" value="LARGE RIBOSOMAL SUBUNIT PROTEIN UL30M"/>
    <property type="match status" value="1"/>
</dbReference>
<dbReference type="PANTHER" id="PTHR15892">
    <property type="entry name" value="MITOCHONDRIAL RIBOSOMAL PROTEIN L30"/>
    <property type="match status" value="1"/>
</dbReference>
<dbReference type="Pfam" id="PF00327">
    <property type="entry name" value="Ribosomal_L30"/>
    <property type="match status" value="1"/>
</dbReference>
<dbReference type="PIRSF" id="PIRSF002211">
    <property type="entry name" value="Ribosomal_L30_bac-type"/>
    <property type="match status" value="1"/>
</dbReference>
<dbReference type="SUPFAM" id="SSF55129">
    <property type="entry name" value="Ribosomal protein L30p/L7e"/>
    <property type="match status" value="1"/>
</dbReference>
<comment type="subunit">
    <text evidence="1">Part of the 50S ribosomal subunit.</text>
</comment>
<comment type="similarity">
    <text evidence="1">Belongs to the universal ribosomal protein uL30 family.</text>
</comment>
<reference key="1">
    <citation type="journal article" date="2009" name="J. Bacteriol.">
        <title>Genome sequence of Azotobacter vinelandii, an obligate aerobe specialized to support diverse anaerobic metabolic processes.</title>
        <authorList>
            <person name="Setubal J.C."/>
            <person name="Dos Santos P."/>
            <person name="Goldman B.S."/>
            <person name="Ertesvaag H."/>
            <person name="Espin G."/>
            <person name="Rubio L.M."/>
            <person name="Valla S."/>
            <person name="Almeida N.F."/>
            <person name="Balasubramanian D."/>
            <person name="Cromes L."/>
            <person name="Curatti L."/>
            <person name="Du Z."/>
            <person name="Godsy E."/>
            <person name="Goodner B."/>
            <person name="Hellner-Burris K."/>
            <person name="Hernandez J.A."/>
            <person name="Houmiel K."/>
            <person name="Imperial J."/>
            <person name="Kennedy C."/>
            <person name="Larson T.J."/>
            <person name="Latreille P."/>
            <person name="Ligon L.S."/>
            <person name="Lu J."/>
            <person name="Maerk M."/>
            <person name="Miller N.M."/>
            <person name="Norton S."/>
            <person name="O'Carroll I.P."/>
            <person name="Paulsen I."/>
            <person name="Raulfs E.C."/>
            <person name="Roemer R."/>
            <person name="Rosser J."/>
            <person name="Segura D."/>
            <person name="Slater S."/>
            <person name="Stricklin S.L."/>
            <person name="Studholme D.J."/>
            <person name="Sun J."/>
            <person name="Viana C.J."/>
            <person name="Wallin E."/>
            <person name="Wang B."/>
            <person name="Wheeler C."/>
            <person name="Zhu H."/>
            <person name="Dean D.R."/>
            <person name="Dixon R."/>
            <person name="Wood D."/>
        </authorList>
    </citation>
    <scope>NUCLEOTIDE SEQUENCE [LARGE SCALE GENOMIC DNA]</scope>
    <source>
        <strain>DJ / ATCC BAA-1303</strain>
    </source>
</reference>
<sequence length="58" mass="6394">MATVKVTLVKSLIGRLANHKACVKGLGLRRIGHTVEVQDTPENRGMINKAHYLLRVEG</sequence>
<name>RL30_AZOVD</name>
<proteinExistence type="inferred from homology"/>
<evidence type="ECO:0000255" key="1">
    <source>
        <dbReference type="HAMAP-Rule" id="MF_01371"/>
    </source>
</evidence>
<evidence type="ECO:0000305" key="2"/>
<gene>
    <name evidence="1" type="primary">rpmD</name>
    <name type="ordered locus">Avin_06430</name>
</gene>
<accession>C1DKN1</accession>